<evidence type="ECO:0000255" key="1">
    <source>
        <dbReference type="HAMAP-Rule" id="MF_00147"/>
    </source>
</evidence>
<accession>A3CV22</accession>
<sequence length="222" mass="22991">MDSPFVLVNLKTYQEGMGSNAHRIAAAAETVAKESGAVIGIAPAFTELHPMSHHYAIPVYAQHIDAITPGAHTGHILPEAVRSAGARGTLINHSERRLTLADIGACVESARRLHLETVVCTNNDATSAAAAALRPDYVAIEPPELIGSGVSVSKADPGIIERSVNAVRAVNPDVNVLTGAGIQSGECVKIAVDLGTCGVLLASSVVKADDPEAVLRDLVSLL</sequence>
<proteinExistence type="inferred from homology"/>
<organism>
    <name type="scientific">Methanoculleus marisnigri (strain ATCC 35101 / DSM 1498 / JR1)</name>
    <dbReference type="NCBI Taxonomy" id="368407"/>
    <lineage>
        <taxon>Archaea</taxon>
        <taxon>Methanobacteriati</taxon>
        <taxon>Methanobacteriota</taxon>
        <taxon>Stenosarchaea group</taxon>
        <taxon>Methanomicrobia</taxon>
        <taxon>Methanomicrobiales</taxon>
        <taxon>Methanomicrobiaceae</taxon>
        <taxon>Methanoculleus</taxon>
    </lineage>
</organism>
<gene>
    <name evidence="1" type="primary">tpiA</name>
    <name type="ordered locus">Memar_1292</name>
</gene>
<protein>
    <recommendedName>
        <fullName evidence="1">Triosephosphate isomerase</fullName>
        <shortName evidence="1">TIM</shortName>
        <shortName evidence="1">TPI</shortName>
        <ecNumber evidence="1">5.3.1.1</ecNumber>
    </recommendedName>
    <alternativeName>
        <fullName evidence="1">Triose-phosphate isomerase</fullName>
    </alternativeName>
</protein>
<name>TPIS_METMJ</name>
<comment type="function">
    <text evidence="1">Involved in the gluconeogenesis. Catalyzes stereospecifically the conversion of dihydroxyacetone phosphate (DHAP) to D-glyceraldehyde-3-phosphate (G3P).</text>
</comment>
<comment type="catalytic activity">
    <reaction evidence="1">
        <text>D-glyceraldehyde 3-phosphate = dihydroxyacetone phosphate</text>
        <dbReference type="Rhea" id="RHEA:18585"/>
        <dbReference type="ChEBI" id="CHEBI:57642"/>
        <dbReference type="ChEBI" id="CHEBI:59776"/>
        <dbReference type="EC" id="5.3.1.1"/>
    </reaction>
</comment>
<comment type="pathway">
    <text evidence="1">Carbohydrate biosynthesis; gluconeogenesis.</text>
</comment>
<comment type="pathway">
    <text evidence="1">Carbohydrate degradation; glycolysis; D-glyceraldehyde 3-phosphate from glycerone phosphate: step 1/1.</text>
</comment>
<comment type="subunit">
    <text evidence="1">Homotetramer; dimer of dimers.</text>
</comment>
<comment type="subcellular location">
    <subcellularLocation>
        <location evidence="1">Cytoplasm</location>
    </subcellularLocation>
</comment>
<comment type="similarity">
    <text evidence="1">Belongs to the triosephosphate isomerase family.</text>
</comment>
<keyword id="KW-0963">Cytoplasm</keyword>
<keyword id="KW-0312">Gluconeogenesis</keyword>
<keyword id="KW-0324">Glycolysis</keyword>
<keyword id="KW-0413">Isomerase</keyword>
<dbReference type="EC" id="5.3.1.1" evidence="1"/>
<dbReference type="EMBL" id="CP000562">
    <property type="protein sequence ID" value="ABN57222.1"/>
    <property type="molecule type" value="Genomic_DNA"/>
</dbReference>
<dbReference type="RefSeq" id="WP_011844133.1">
    <property type="nucleotide sequence ID" value="NC_009051.1"/>
</dbReference>
<dbReference type="SMR" id="A3CV22"/>
<dbReference type="STRING" id="368407.Memar_1292"/>
<dbReference type="GeneID" id="4848097"/>
<dbReference type="GeneID" id="76729364"/>
<dbReference type="KEGG" id="mem:Memar_1292"/>
<dbReference type="eggNOG" id="arCOG01087">
    <property type="taxonomic scope" value="Archaea"/>
</dbReference>
<dbReference type="HOGENOM" id="CLU_104921_0_0_2"/>
<dbReference type="OrthoDB" id="9465at2157"/>
<dbReference type="UniPathway" id="UPA00109">
    <property type="reaction ID" value="UER00189"/>
</dbReference>
<dbReference type="UniPathway" id="UPA00138"/>
<dbReference type="Proteomes" id="UP000002146">
    <property type="component" value="Chromosome"/>
</dbReference>
<dbReference type="GO" id="GO:0005737">
    <property type="term" value="C:cytoplasm"/>
    <property type="evidence" value="ECO:0007669"/>
    <property type="project" value="UniProtKB-SubCell"/>
</dbReference>
<dbReference type="GO" id="GO:0004807">
    <property type="term" value="F:triose-phosphate isomerase activity"/>
    <property type="evidence" value="ECO:0007669"/>
    <property type="project" value="UniProtKB-UniRule"/>
</dbReference>
<dbReference type="GO" id="GO:0006094">
    <property type="term" value="P:gluconeogenesis"/>
    <property type="evidence" value="ECO:0007669"/>
    <property type="project" value="UniProtKB-UniRule"/>
</dbReference>
<dbReference type="GO" id="GO:0006096">
    <property type="term" value="P:glycolytic process"/>
    <property type="evidence" value="ECO:0007669"/>
    <property type="project" value="UniProtKB-UniRule"/>
</dbReference>
<dbReference type="CDD" id="cd00311">
    <property type="entry name" value="TIM"/>
    <property type="match status" value="1"/>
</dbReference>
<dbReference type="FunFam" id="3.20.20.70:FF:000223">
    <property type="entry name" value="Triosephosphate isomerase"/>
    <property type="match status" value="1"/>
</dbReference>
<dbReference type="Gene3D" id="3.20.20.70">
    <property type="entry name" value="Aldolase class I"/>
    <property type="match status" value="1"/>
</dbReference>
<dbReference type="HAMAP" id="MF_00147_A">
    <property type="entry name" value="TIM_A"/>
    <property type="match status" value="1"/>
</dbReference>
<dbReference type="InterPro" id="IPR013785">
    <property type="entry name" value="Aldolase_TIM"/>
</dbReference>
<dbReference type="InterPro" id="IPR035990">
    <property type="entry name" value="TIM_sf"/>
</dbReference>
<dbReference type="InterPro" id="IPR000652">
    <property type="entry name" value="Triosephosphate_isomerase"/>
</dbReference>
<dbReference type="InterPro" id="IPR022891">
    <property type="entry name" value="Triosephosphate_isomerase_arc"/>
</dbReference>
<dbReference type="NCBIfam" id="NF003302">
    <property type="entry name" value="PRK04302.1"/>
    <property type="match status" value="1"/>
</dbReference>
<dbReference type="NCBIfam" id="TIGR00419">
    <property type="entry name" value="tim"/>
    <property type="match status" value="1"/>
</dbReference>
<dbReference type="Pfam" id="PF00121">
    <property type="entry name" value="TIM"/>
    <property type="match status" value="1"/>
</dbReference>
<dbReference type="SUPFAM" id="SSF51351">
    <property type="entry name" value="Triosephosphate isomerase (TIM)"/>
    <property type="match status" value="1"/>
</dbReference>
<dbReference type="PROSITE" id="PS51440">
    <property type="entry name" value="TIM_2"/>
    <property type="match status" value="1"/>
</dbReference>
<feature type="chain" id="PRO_0000307606" description="Triosephosphate isomerase">
    <location>
        <begin position="1"/>
        <end position="222"/>
    </location>
</feature>
<feature type="active site" description="Electrophile" evidence="1">
    <location>
        <position position="93"/>
    </location>
</feature>
<feature type="active site" description="Proton acceptor" evidence="1">
    <location>
        <position position="141"/>
    </location>
</feature>
<feature type="binding site" evidence="1">
    <location>
        <begin position="9"/>
        <end position="11"/>
    </location>
    <ligand>
        <name>substrate</name>
    </ligand>
</feature>
<feature type="binding site" evidence="1">
    <location>
        <position position="146"/>
    </location>
    <ligand>
        <name>substrate</name>
    </ligand>
</feature>
<feature type="binding site" evidence="1">
    <location>
        <position position="181"/>
    </location>
    <ligand>
        <name>substrate</name>
    </ligand>
</feature>
<feature type="binding site" evidence="1">
    <location>
        <begin position="202"/>
        <end position="203"/>
    </location>
    <ligand>
        <name>substrate</name>
    </ligand>
</feature>
<reference key="1">
    <citation type="journal article" date="2009" name="Stand. Genomic Sci.">
        <title>Complete genome sequence of Methanoculleus marisnigri Romesser et al. 1981 type strain JR1.</title>
        <authorList>
            <person name="Anderson I.J."/>
            <person name="Sieprawska-Lupa M."/>
            <person name="Lapidus A."/>
            <person name="Nolan M."/>
            <person name="Copeland A."/>
            <person name="Glavina Del Rio T."/>
            <person name="Tice H."/>
            <person name="Dalin E."/>
            <person name="Barry K."/>
            <person name="Saunders E."/>
            <person name="Han C."/>
            <person name="Brettin T."/>
            <person name="Detter J.C."/>
            <person name="Bruce D."/>
            <person name="Mikhailova N."/>
            <person name="Pitluck S."/>
            <person name="Hauser L."/>
            <person name="Land M."/>
            <person name="Lucas S."/>
            <person name="Richardson P."/>
            <person name="Whitman W.B."/>
            <person name="Kyrpides N.C."/>
        </authorList>
    </citation>
    <scope>NUCLEOTIDE SEQUENCE [LARGE SCALE GENOMIC DNA]</scope>
    <source>
        <strain>ATCC 35101 / DSM 1498 / JR1</strain>
    </source>
</reference>